<protein>
    <recommendedName>
        <fullName evidence="1">3-isopropylmalate dehydratase large subunit</fullName>
        <ecNumber evidence="1">4.2.1.33</ecNumber>
    </recommendedName>
    <alternativeName>
        <fullName evidence="1">Alpha-IPM isomerase</fullName>
        <shortName evidence="1">IPMI</shortName>
    </alternativeName>
    <alternativeName>
        <fullName evidence="1">Isopropylmalate isomerase</fullName>
    </alternativeName>
</protein>
<evidence type="ECO:0000255" key="1">
    <source>
        <dbReference type="HAMAP-Rule" id="MF_01026"/>
    </source>
</evidence>
<name>LEUC_BRUAB</name>
<dbReference type="EC" id="4.2.1.33" evidence="1"/>
<dbReference type="EMBL" id="AE017223">
    <property type="protein sequence ID" value="AAX75194.1"/>
    <property type="molecule type" value="Genomic_DNA"/>
</dbReference>
<dbReference type="RefSeq" id="WP_002964974.1">
    <property type="nucleotide sequence ID" value="NC_006932.1"/>
</dbReference>
<dbReference type="SMR" id="Q57AZ0"/>
<dbReference type="EnsemblBacteria" id="AAX75194">
    <property type="protein sequence ID" value="AAX75194"/>
    <property type="gene ID" value="BruAb1_1882"/>
</dbReference>
<dbReference type="GeneID" id="93017762"/>
<dbReference type="KEGG" id="bmb:BruAb1_1882"/>
<dbReference type="HOGENOM" id="CLU_006714_3_4_5"/>
<dbReference type="UniPathway" id="UPA00048">
    <property type="reaction ID" value="UER00071"/>
</dbReference>
<dbReference type="PRO" id="PR:Q57AZ0"/>
<dbReference type="Proteomes" id="UP000000540">
    <property type="component" value="Chromosome I"/>
</dbReference>
<dbReference type="GO" id="GO:0003861">
    <property type="term" value="F:3-isopropylmalate dehydratase activity"/>
    <property type="evidence" value="ECO:0007669"/>
    <property type="project" value="UniProtKB-UniRule"/>
</dbReference>
<dbReference type="GO" id="GO:0051539">
    <property type="term" value="F:4 iron, 4 sulfur cluster binding"/>
    <property type="evidence" value="ECO:0007669"/>
    <property type="project" value="UniProtKB-KW"/>
</dbReference>
<dbReference type="GO" id="GO:0046872">
    <property type="term" value="F:metal ion binding"/>
    <property type="evidence" value="ECO:0007669"/>
    <property type="project" value="UniProtKB-KW"/>
</dbReference>
<dbReference type="GO" id="GO:0009098">
    <property type="term" value="P:L-leucine biosynthetic process"/>
    <property type="evidence" value="ECO:0007669"/>
    <property type="project" value="UniProtKB-UniRule"/>
</dbReference>
<dbReference type="CDD" id="cd01583">
    <property type="entry name" value="IPMI"/>
    <property type="match status" value="1"/>
</dbReference>
<dbReference type="FunFam" id="3.30.499.10:FF:000006">
    <property type="entry name" value="3-isopropylmalate dehydratase large subunit"/>
    <property type="match status" value="1"/>
</dbReference>
<dbReference type="FunFam" id="3.30.499.10:FF:000007">
    <property type="entry name" value="3-isopropylmalate dehydratase large subunit"/>
    <property type="match status" value="1"/>
</dbReference>
<dbReference type="Gene3D" id="3.30.499.10">
    <property type="entry name" value="Aconitase, domain 3"/>
    <property type="match status" value="2"/>
</dbReference>
<dbReference type="HAMAP" id="MF_01026">
    <property type="entry name" value="LeuC_type1"/>
    <property type="match status" value="1"/>
</dbReference>
<dbReference type="InterPro" id="IPR004430">
    <property type="entry name" value="3-IsopropMal_deHydase_lsu"/>
</dbReference>
<dbReference type="InterPro" id="IPR015931">
    <property type="entry name" value="Acnase/IPM_dHydase_lsu_aba_1/3"/>
</dbReference>
<dbReference type="InterPro" id="IPR001030">
    <property type="entry name" value="Acoase/IPM_deHydtase_lsu_aba"/>
</dbReference>
<dbReference type="InterPro" id="IPR018136">
    <property type="entry name" value="Aconitase_4Fe-4S_BS"/>
</dbReference>
<dbReference type="InterPro" id="IPR036008">
    <property type="entry name" value="Aconitase_4Fe-4S_dom"/>
</dbReference>
<dbReference type="InterPro" id="IPR050067">
    <property type="entry name" value="IPM_dehydratase_rel_enz"/>
</dbReference>
<dbReference type="InterPro" id="IPR033941">
    <property type="entry name" value="IPMI_cat"/>
</dbReference>
<dbReference type="NCBIfam" id="TIGR00170">
    <property type="entry name" value="leuC"/>
    <property type="match status" value="1"/>
</dbReference>
<dbReference type="NCBIfam" id="NF004016">
    <property type="entry name" value="PRK05478.1"/>
    <property type="match status" value="1"/>
</dbReference>
<dbReference type="NCBIfam" id="NF009116">
    <property type="entry name" value="PRK12466.1"/>
    <property type="match status" value="1"/>
</dbReference>
<dbReference type="PANTHER" id="PTHR43822:SF9">
    <property type="entry name" value="3-ISOPROPYLMALATE DEHYDRATASE"/>
    <property type="match status" value="1"/>
</dbReference>
<dbReference type="PANTHER" id="PTHR43822">
    <property type="entry name" value="HOMOACONITASE, MITOCHONDRIAL-RELATED"/>
    <property type="match status" value="1"/>
</dbReference>
<dbReference type="Pfam" id="PF00330">
    <property type="entry name" value="Aconitase"/>
    <property type="match status" value="1"/>
</dbReference>
<dbReference type="PRINTS" id="PR00415">
    <property type="entry name" value="ACONITASE"/>
</dbReference>
<dbReference type="SUPFAM" id="SSF53732">
    <property type="entry name" value="Aconitase iron-sulfur domain"/>
    <property type="match status" value="1"/>
</dbReference>
<dbReference type="PROSITE" id="PS00450">
    <property type="entry name" value="ACONITASE_1"/>
    <property type="match status" value="1"/>
</dbReference>
<dbReference type="PROSITE" id="PS01244">
    <property type="entry name" value="ACONITASE_2"/>
    <property type="match status" value="1"/>
</dbReference>
<proteinExistence type="inferred from homology"/>
<feature type="chain" id="PRO_1000063531" description="3-isopropylmalate dehydratase large subunit">
    <location>
        <begin position="1"/>
        <end position="469"/>
    </location>
</feature>
<feature type="binding site" evidence="1">
    <location>
        <position position="350"/>
    </location>
    <ligand>
        <name>[4Fe-4S] cluster</name>
        <dbReference type="ChEBI" id="CHEBI:49883"/>
    </ligand>
</feature>
<feature type="binding site" evidence="1">
    <location>
        <position position="410"/>
    </location>
    <ligand>
        <name>[4Fe-4S] cluster</name>
        <dbReference type="ChEBI" id="CHEBI:49883"/>
    </ligand>
</feature>
<feature type="binding site" evidence="1">
    <location>
        <position position="413"/>
    </location>
    <ligand>
        <name>[4Fe-4S] cluster</name>
        <dbReference type="ChEBI" id="CHEBI:49883"/>
    </ligand>
</feature>
<gene>
    <name evidence="1" type="primary">leuC</name>
    <name type="ordered locus">BruAb1_1882</name>
</gene>
<reference key="1">
    <citation type="journal article" date="2005" name="J. Bacteriol.">
        <title>Completion of the genome sequence of Brucella abortus and comparison to the highly similar genomes of Brucella melitensis and Brucella suis.</title>
        <authorList>
            <person name="Halling S.M."/>
            <person name="Peterson-Burch B.D."/>
            <person name="Bricker B.J."/>
            <person name="Zuerner R.L."/>
            <person name="Qing Z."/>
            <person name="Li L.-L."/>
            <person name="Kapur V."/>
            <person name="Alt D.P."/>
            <person name="Olsen S.C."/>
        </authorList>
    </citation>
    <scope>NUCLEOTIDE SEQUENCE [LARGE SCALE GENOMIC DNA]</scope>
    <source>
        <strain>9-941</strain>
    </source>
</reference>
<organism>
    <name type="scientific">Brucella abortus biovar 1 (strain 9-941)</name>
    <dbReference type="NCBI Taxonomy" id="262698"/>
    <lineage>
        <taxon>Bacteria</taxon>
        <taxon>Pseudomonadati</taxon>
        <taxon>Pseudomonadota</taxon>
        <taxon>Alphaproteobacteria</taxon>
        <taxon>Hyphomicrobiales</taxon>
        <taxon>Brucellaceae</taxon>
        <taxon>Brucella/Ochrobactrum group</taxon>
        <taxon>Brucella</taxon>
    </lineage>
</organism>
<accession>Q57AZ0</accession>
<sequence>MSAPRTLYDKIWDDHVVDQQEDGTCLLYIDRHLVHEVTSPQAFEGLRMAGRPVRHPEKTLAVVDHNVPTSPDRINGIQNEESRIQVEALARNAADFGVEYYSERDKRQGIVHIVGPEQGFTLPGMTIVCGDSHTSTHGAFGALAHGIGTSEVEHVLATQTLIQKKAKNMLVRVDGKLPAGVTAKDIVLAIIGEIGTAGGTGYVIEYAGEAIRSLSMEGRMTICNMSIEGGARAGLIAPDETTFEYIKGRPRAPQGETLEQAINYWKTLHSDEGAHFDKIVTLDAGSLPPIVSWGSSPEDVVSVTGVVPNPDDIADETKRASKWRALDYMGLKPGTKITDIAVDRVFIGSCTNGRIEDLRAAAKVVEGKKVAPTVNAMIVPGSGLVKEQAEAEGLHKIFIEAGFDWREPGCSMCLAMNDDRLKPGERCASTSNRNFEGRQGFKGRTHLVSPAMAAAAAIAGHFVDIRAWK</sequence>
<comment type="function">
    <text evidence="1">Catalyzes the isomerization between 2-isopropylmalate and 3-isopropylmalate, via the formation of 2-isopropylmaleate.</text>
</comment>
<comment type="catalytic activity">
    <reaction evidence="1">
        <text>(2R,3S)-3-isopropylmalate = (2S)-2-isopropylmalate</text>
        <dbReference type="Rhea" id="RHEA:32287"/>
        <dbReference type="ChEBI" id="CHEBI:1178"/>
        <dbReference type="ChEBI" id="CHEBI:35121"/>
        <dbReference type="EC" id="4.2.1.33"/>
    </reaction>
</comment>
<comment type="cofactor">
    <cofactor evidence="1">
        <name>[4Fe-4S] cluster</name>
        <dbReference type="ChEBI" id="CHEBI:49883"/>
    </cofactor>
    <text evidence="1">Binds 1 [4Fe-4S] cluster per subunit.</text>
</comment>
<comment type="pathway">
    <text evidence="1">Amino-acid biosynthesis; L-leucine biosynthesis; L-leucine from 3-methyl-2-oxobutanoate: step 2/4.</text>
</comment>
<comment type="subunit">
    <text evidence="1">Heterodimer of LeuC and LeuD.</text>
</comment>
<comment type="similarity">
    <text evidence="1">Belongs to the aconitase/IPM isomerase family. LeuC type 1 subfamily.</text>
</comment>
<keyword id="KW-0004">4Fe-4S</keyword>
<keyword id="KW-0028">Amino-acid biosynthesis</keyword>
<keyword id="KW-0100">Branched-chain amino acid biosynthesis</keyword>
<keyword id="KW-0408">Iron</keyword>
<keyword id="KW-0411">Iron-sulfur</keyword>
<keyword id="KW-0432">Leucine biosynthesis</keyword>
<keyword id="KW-0456">Lyase</keyword>
<keyword id="KW-0479">Metal-binding</keyword>